<organismHost>
    <name type="scientific">Homo sapiens</name>
    <name type="common">Human</name>
    <dbReference type="NCBI Taxonomy" id="9606"/>
</organismHost>
<evidence type="ECO:0000250" key="1">
    <source>
        <dbReference type="UniProtKB" id="P06726"/>
    </source>
</evidence>
<evidence type="ECO:0000256" key="2">
    <source>
        <dbReference type="SAM" id="MobiDB-lite"/>
    </source>
</evidence>
<evidence type="ECO:0000305" key="3"/>
<gene>
    <name type="primary">UL82</name>
</gene>
<proteinExistence type="inferred from homology"/>
<reference key="1">
    <citation type="journal article" date="2004" name="J. Gen. Virol.">
        <title>Genetic content of wild-type human cytomegalovirus.</title>
        <authorList>
            <person name="Dolan A."/>
            <person name="Cunningham C."/>
            <person name="Hector R.D."/>
            <person name="Hassan-Walker A.F."/>
            <person name="Lee L."/>
            <person name="Addison C."/>
            <person name="Dargan D.J."/>
            <person name="McGeoch D.J."/>
            <person name="Gatherer D."/>
            <person name="Emery V.C."/>
            <person name="Griffiths P.D."/>
            <person name="Sinzger C."/>
            <person name="McSharry B.P."/>
            <person name="Wilkinson G.W.G."/>
            <person name="Davison A.J."/>
        </authorList>
    </citation>
    <scope>NUCLEOTIDE SEQUENCE [LARGE SCALE GENOMIC DNA]</scope>
</reference>
<organism>
    <name type="scientific">Human cytomegalovirus (strain Merlin)</name>
    <name type="common">HHV-5</name>
    <name type="synonym">Human herpesvirus 5</name>
    <dbReference type="NCBI Taxonomy" id="295027"/>
    <lineage>
        <taxon>Viruses</taxon>
        <taxon>Duplodnaviria</taxon>
        <taxon>Heunggongvirae</taxon>
        <taxon>Peploviricota</taxon>
        <taxon>Herviviricetes</taxon>
        <taxon>Herpesvirales</taxon>
        <taxon>Orthoherpesviridae</taxon>
        <taxon>Betaherpesvirinae</taxon>
        <taxon>Cytomegalovirus</taxon>
        <taxon>Cytomegalovirus humanbeta5</taxon>
        <taxon>Human cytomegalovirus</taxon>
    </lineage>
</organism>
<dbReference type="EMBL" id="AY446894">
    <property type="protein sequence ID" value="AAR31634.1"/>
    <property type="molecule type" value="Genomic_DNA"/>
</dbReference>
<dbReference type="RefSeq" id="YP_081530.1">
    <property type="nucleotide sequence ID" value="NC_006273.2"/>
</dbReference>
<dbReference type="SMR" id="F5HBC6"/>
<dbReference type="BioGRID" id="1678083">
    <property type="interactions" value="2"/>
</dbReference>
<dbReference type="GeneID" id="3077530"/>
<dbReference type="KEGG" id="vg:3077530"/>
<dbReference type="Reactome" id="R-HSA-9609690">
    <property type="pathway name" value="HCMV Early Events"/>
</dbReference>
<dbReference type="Reactome" id="R-HSA-9610379">
    <property type="pathway name" value="HCMV Late Events"/>
</dbReference>
<dbReference type="Proteomes" id="UP000000938">
    <property type="component" value="Segment"/>
</dbReference>
<dbReference type="GO" id="GO:0044165">
    <property type="term" value="C:host cell endoplasmic reticulum"/>
    <property type="evidence" value="ECO:0007669"/>
    <property type="project" value="UniProtKB-SubCell"/>
</dbReference>
<dbReference type="GO" id="GO:0042025">
    <property type="term" value="C:host cell nucleus"/>
    <property type="evidence" value="ECO:0000250"/>
    <property type="project" value="UniProtKB"/>
</dbReference>
<dbReference type="GO" id="GO:0019033">
    <property type="term" value="C:viral tegument"/>
    <property type="evidence" value="ECO:0000304"/>
    <property type="project" value="Reactome"/>
</dbReference>
<dbReference type="GO" id="GO:0039695">
    <property type="term" value="P:DNA-templated viral transcription"/>
    <property type="evidence" value="ECO:0000250"/>
    <property type="project" value="UniProtKB"/>
</dbReference>
<dbReference type="GO" id="GO:0039645">
    <property type="term" value="P:symbiont-mediated perturbation of host cell cycle G1/S transition checkpoint"/>
    <property type="evidence" value="ECO:0007669"/>
    <property type="project" value="UniProtKB-KW"/>
</dbReference>
<dbReference type="InterPro" id="IPR008649">
    <property type="entry name" value="Herpes_UL82/UL83"/>
</dbReference>
<dbReference type="Pfam" id="PF05784">
    <property type="entry name" value="Herpes_UL82_83"/>
    <property type="match status" value="1"/>
</dbReference>
<name>PP71_HCMVM</name>
<accession>F5HBC6</accession>
<comment type="function">
    <text evidence="1">Stimulates viral immediate-early (IE) transcription. Plays a role in the inhibition of the host innate repsonse by targeting STING1 and thus the cGAS-STING pathway. Also counteracts host DAXX-mediated repression of viral transcription. Displaces a DAXX-binding protein, ATRX, from nuclear domain 10 sites (ND10) shortly after infection. Increases the basal level of SUMOylated DAXX in infected cells. Stimulates quiescent cells to re-enter the cell cycle, proceed through G1 and enter the S phase. Interacts with hypophosphorylated forms of RB1 and induces their degradation by the proteasome without involving ubiquitin conjugation.</text>
</comment>
<comment type="subunit">
    <text evidence="1">Interacts with the host protein DAXX; this interaction takes place at ND10 and induces the reversal of DAXX-mediated repression of viral transcription. Interacts with UL35. Interacts with host TMEM173/STING1; this interaction inhibits the cGAS/STING pathway. Interacts with host RB1; this interaction mediates RB1 proteasomal degradation.</text>
</comment>
<comment type="subcellular location">
    <subcellularLocation>
        <location evidence="1">Virion tegument</location>
    </subcellularLocation>
    <subcellularLocation>
        <location evidence="1">Host nucleus</location>
    </subcellularLocation>
    <subcellularLocation>
        <location evidence="1">Host endoplasmic reticulum</location>
    </subcellularLocation>
    <text evidence="1">Present in the nucleus shortly after infection as well as during the late phase of viral morphogenesis. Detected at nuclear domain 10 (ND10).</text>
</comment>
<comment type="PTM">
    <text evidence="1">S-nitrosylation limits ability to undermine the cGAS/STING antiviral pathway.</text>
</comment>
<comment type="similarity">
    <text evidence="3">Belongs to the herpesviridae pp71 family.</text>
</comment>
<protein>
    <recommendedName>
        <fullName>Protein pp71</fullName>
    </recommendedName>
</protein>
<keyword id="KW-0010">Activator</keyword>
<keyword id="KW-1078">G1/S host cell cycle checkpoint dysregulation by virus</keyword>
<keyword id="KW-1038">Host endoplasmic reticulum</keyword>
<keyword id="KW-1048">Host nucleus</keyword>
<keyword id="KW-0945">Host-virus interaction</keyword>
<keyword id="KW-1121">Modulation of host cell cycle by virus</keyword>
<keyword id="KW-0597">Phosphoprotein</keyword>
<keyword id="KW-1185">Reference proteome</keyword>
<keyword id="KW-0702">S-nitrosylation</keyword>
<keyword id="KW-0946">Virion</keyword>
<keyword id="KW-0920">Virion tegument</keyword>
<sequence>MSQASSSPGEGPSSEAAAISEAEAASGSFGRLHCQVLRLITNVEGGSLEAGRLRLLDLRTNIEVSRPSVLCCFQENKSPHDTVDLTDLNIKGRCVVGEQDRLLVDLNNFGPRRLTPGSENNTVSVLAFALPLDRVPVSGLHLFQSQRRGGEENRPRMEARAIIRRTAHHWAVRLTVTPNWRRRTDSSLEAGQIFVSQFAFRAGAIPLTLVDALEQLACSDPNTYIHKTETDERGQWIMLFLHHDSPHPPTSVFLHFSVYTHRAEVVARHNPYPHLRRLPDNGFQLLIPKSFTLTRIHPEYIVQIQNAFETNQTHDTIFFPENIPGVSIEAGPLPDRVRITLRVTLTGDQAVHLEHRQPLGRIHFFRRGFWTLTPGKPDKIKRPQVQLRAGLFPRSNVMRGAVSEFLPQSPGLPPTEEEEEEEEEDDEDDLSSTPTPTPLSEAMFAGFEEASGDEDSDTQAGLSRALILTGQRRRSGNNGALTLVIPSWHVFASLDDLVPLTVSVQHAALRPTSYLRSDMDGDVRTAADISSTLRSVPAPRPSPISTASTSSTPRSRPRI</sequence>
<feature type="chain" id="PRO_0000418269" description="Protein pp71">
    <location>
        <begin position="1"/>
        <end position="559"/>
    </location>
</feature>
<feature type="region of interest" description="Disordered" evidence="2">
    <location>
        <begin position="404"/>
        <end position="440"/>
    </location>
</feature>
<feature type="region of interest" description="Disordered" evidence="2">
    <location>
        <begin position="530"/>
        <end position="559"/>
    </location>
</feature>
<feature type="compositionally biased region" description="Acidic residues" evidence="2">
    <location>
        <begin position="415"/>
        <end position="430"/>
    </location>
</feature>
<feature type="compositionally biased region" description="Low complexity" evidence="2">
    <location>
        <begin position="431"/>
        <end position="440"/>
    </location>
</feature>
<feature type="compositionally biased region" description="Low complexity" evidence="2">
    <location>
        <begin position="543"/>
        <end position="559"/>
    </location>
</feature>
<feature type="modified residue" description="S-nitrosocysteine; by host" evidence="1">
    <location>
        <position position="218"/>
    </location>
</feature>
<feature type="modified residue" description="Phosphothreonine" evidence="1">
    <location>
        <position position="223"/>
    </location>
</feature>